<reference key="1">
    <citation type="journal article" date="2011" name="Cell">
        <title>Insight into structure and assembly of the nuclear pore complex by utilizing the genome of a eukaryotic thermophile.</title>
        <authorList>
            <person name="Amlacher S."/>
            <person name="Sarges P."/>
            <person name="Flemming D."/>
            <person name="van Noort V."/>
            <person name="Kunze R."/>
            <person name="Devos D.P."/>
            <person name="Arumugam M."/>
            <person name="Bork P."/>
            <person name="Hurt E."/>
        </authorList>
    </citation>
    <scope>NUCLEOTIDE SEQUENCE [LARGE SCALE GENOMIC DNA]</scope>
    <source>
        <strain>DSM 1495 / CBS 144.50 / IMI 039719</strain>
    </source>
</reference>
<organism>
    <name type="scientific">Chaetomium thermophilum (strain DSM 1495 / CBS 144.50 / IMI 039719)</name>
    <name type="common">Thermochaetoides thermophila</name>
    <dbReference type="NCBI Taxonomy" id="759272"/>
    <lineage>
        <taxon>Eukaryota</taxon>
        <taxon>Fungi</taxon>
        <taxon>Dikarya</taxon>
        <taxon>Ascomycota</taxon>
        <taxon>Pezizomycotina</taxon>
        <taxon>Sordariomycetes</taxon>
        <taxon>Sordariomycetidae</taxon>
        <taxon>Sordariales</taxon>
        <taxon>Chaetomiaceae</taxon>
        <taxon>Thermochaetoides</taxon>
    </lineage>
</organism>
<name>REI1_CHATD</name>
<evidence type="ECO:0000250" key="1">
    <source>
        <dbReference type="UniProtKB" id="P38344"/>
    </source>
</evidence>
<evidence type="ECO:0000256" key="2">
    <source>
        <dbReference type="SAM" id="MobiDB-lite"/>
    </source>
</evidence>
<evidence type="ECO:0000305" key="3"/>
<keyword id="KW-0963">Cytoplasm</keyword>
<keyword id="KW-0479">Metal-binding</keyword>
<keyword id="KW-1185">Reference proteome</keyword>
<keyword id="KW-0677">Repeat</keyword>
<keyword id="KW-0690">Ribosome biogenesis</keyword>
<keyword id="KW-0862">Zinc</keyword>
<keyword id="KW-0863">Zinc-finger</keyword>
<dbReference type="EMBL" id="GL988043">
    <property type="protein sequence ID" value="EGS19931.1"/>
    <property type="status" value="ALT_INIT"/>
    <property type="molecule type" value="Genomic_DNA"/>
</dbReference>
<dbReference type="RefSeq" id="XP_006694816.1">
    <property type="nucleotide sequence ID" value="XM_006694753.1"/>
</dbReference>
<dbReference type="STRING" id="759272.G0S920"/>
<dbReference type="GeneID" id="18258462"/>
<dbReference type="KEGG" id="cthr:CTHT_0044240"/>
<dbReference type="eggNOG" id="KOG2785">
    <property type="taxonomic scope" value="Eukaryota"/>
</dbReference>
<dbReference type="HOGENOM" id="CLU_018787_1_2_1"/>
<dbReference type="OrthoDB" id="19329at2759"/>
<dbReference type="Proteomes" id="UP000008066">
    <property type="component" value="Unassembled WGS sequence"/>
</dbReference>
<dbReference type="GO" id="GO:0005737">
    <property type="term" value="C:cytoplasm"/>
    <property type="evidence" value="ECO:0007669"/>
    <property type="project" value="UniProtKB-SubCell"/>
</dbReference>
<dbReference type="GO" id="GO:0030687">
    <property type="term" value="C:preribosome, large subunit precursor"/>
    <property type="evidence" value="ECO:0007669"/>
    <property type="project" value="TreeGrafter"/>
</dbReference>
<dbReference type="GO" id="GO:0003676">
    <property type="term" value="F:nucleic acid binding"/>
    <property type="evidence" value="ECO:0007669"/>
    <property type="project" value="InterPro"/>
</dbReference>
<dbReference type="GO" id="GO:0008270">
    <property type="term" value="F:zinc ion binding"/>
    <property type="evidence" value="ECO:0007669"/>
    <property type="project" value="UniProtKB-KW"/>
</dbReference>
<dbReference type="GO" id="GO:0042273">
    <property type="term" value="P:ribosomal large subunit biogenesis"/>
    <property type="evidence" value="ECO:0007669"/>
    <property type="project" value="UniProtKB-ARBA"/>
</dbReference>
<dbReference type="Gene3D" id="3.30.160.60">
    <property type="entry name" value="Classic Zinc Finger"/>
    <property type="match status" value="1"/>
</dbReference>
<dbReference type="InterPro" id="IPR003604">
    <property type="entry name" value="Matrin/U1-like-C_Znf_C2H2"/>
</dbReference>
<dbReference type="InterPro" id="IPR041661">
    <property type="entry name" value="ZN622/Rei1/Reh1_Znf-C2H2"/>
</dbReference>
<dbReference type="InterPro" id="IPR040025">
    <property type="entry name" value="Znf622/Rei1/Reh1"/>
</dbReference>
<dbReference type="InterPro" id="IPR022755">
    <property type="entry name" value="Znf_C2H2_jaz"/>
</dbReference>
<dbReference type="InterPro" id="IPR036236">
    <property type="entry name" value="Znf_C2H2_sf"/>
</dbReference>
<dbReference type="InterPro" id="IPR013087">
    <property type="entry name" value="Znf_C2H2_type"/>
</dbReference>
<dbReference type="PANTHER" id="PTHR13182:SF8">
    <property type="entry name" value="CYTOPLASMIC 60S SUBUNIT BIOGENESIS FACTOR ZNF622"/>
    <property type="match status" value="1"/>
</dbReference>
<dbReference type="PANTHER" id="PTHR13182">
    <property type="entry name" value="ZINC FINGER PROTEIN 622"/>
    <property type="match status" value="1"/>
</dbReference>
<dbReference type="Pfam" id="PF12756">
    <property type="entry name" value="zf-C2H2_2"/>
    <property type="match status" value="1"/>
</dbReference>
<dbReference type="Pfam" id="PF12171">
    <property type="entry name" value="zf-C2H2_jaz"/>
    <property type="match status" value="1"/>
</dbReference>
<dbReference type="SMART" id="SM00355">
    <property type="entry name" value="ZnF_C2H2"/>
    <property type="match status" value="4"/>
</dbReference>
<dbReference type="SMART" id="SM00451">
    <property type="entry name" value="ZnF_U1"/>
    <property type="match status" value="2"/>
</dbReference>
<dbReference type="SUPFAM" id="SSF57667">
    <property type="entry name" value="beta-beta-alpha zinc fingers"/>
    <property type="match status" value="3"/>
</dbReference>
<dbReference type="PROSITE" id="PS00028">
    <property type="entry name" value="ZINC_FINGER_C2H2_1"/>
    <property type="match status" value="2"/>
</dbReference>
<comment type="function">
    <text evidence="1">Pre-60S-associated factor involved in the cytoplasmic maturation of the 60S subunit. Involved in the dissociation and recycling of other late pre-60S factors before newly synthesized large ribosomal subunits enter translation (By similarity).</text>
</comment>
<comment type="subunit">
    <text evidence="1">Associates with nascent pre-60S particles that have not yet entered the translating pool, and is released from mature 60S subunits.</text>
</comment>
<comment type="subcellular location">
    <subcellularLocation>
        <location evidence="1">Cytoplasm</location>
    </subcellularLocation>
</comment>
<comment type="similarity">
    <text evidence="3">Belongs to the REI1 family.</text>
</comment>
<comment type="sequence caution" evidence="3">
    <conflict type="erroneous initiation">
        <sequence resource="EMBL-CDS" id="EGS19931"/>
    </conflict>
    <text>Truncated N-terminus.</text>
</comment>
<protein>
    <recommendedName>
        <fullName>Cytoplasmic 60S subunit biogenesis factor REI1 homolog</fullName>
    </recommendedName>
    <alternativeName>
        <fullName>pre-60S factor REI1 homolog</fullName>
    </alternativeName>
</protein>
<sequence length="537" mass="61196">MATIAGSRAPTEVPSHPYTCNTCQVAFRNSELQRGHMRSDWHRYNLKRRVASLPPISSEVFTEKVLQARAATTAQADKAGFEKTCEVCQKTYYSENSFRNHLSSTKHKSKAAAAARRPANNKVDDDVSSMSFSLGEPARADSVVDSEAEEEFSEVVEGIKNASIHDTASPIKRPSAPQPAVEEQSKTDAQMEETPTTTPKPEALTPSATTCVFCNYESPTPQLNASHMERIHGMFIPEKQYLVDLEGLLKHLWEKVFRYNECLTCGKMKVNVFAIQTHMRDKSHYHIPYTTEEEQLEIGEFYDFRSTYSDGDWETEEEDKGEEDGGVRLGAKRESKVVDENGDEVMEDEEGWETDSDASSLDTDDLHAVPAEGHYHQYERLGKHPHHSRENKKAHREADGIHAPSKRTHAVYYDEYELHLPSGKSVGHRSLARYYRQNLYHYPTPEERAERLAIEAAERENRMDVDGEEPERGRTRTRALVPRDIKGLGVTTMSDPRVRGIVQKGKKEEWKNRDSKWWMHSQVAIKEKAKHPSTYLR</sequence>
<gene>
    <name type="ORF">CTHT_0044240</name>
</gene>
<accession>G0S920</accession>
<proteinExistence type="inferred from homology"/>
<feature type="chain" id="PRO_0000424593" description="Cytoplasmic 60S subunit biogenesis factor REI1 homolog">
    <location>
        <begin position="1"/>
        <end position="537"/>
    </location>
</feature>
<feature type="zinc finger region" description="C2H2-type 1">
    <location>
        <begin position="18"/>
        <end position="42"/>
    </location>
</feature>
<feature type="zinc finger region" description="C2H2-type 2">
    <location>
        <begin position="83"/>
        <end position="107"/>
    </location>
</feature>
<feature type="zinc finger region" description="C2H2-type 3">
    <location>
        <begin position="260"/>
        <end position="284"/>
    </location>
</feature>
<feature type="region of interest" description="Disordered" evidence="2">
    <location>
        <begin position="101"/>
        <end position="151"/>
    </location>
</feature>
<feature type="region of interest" description="Disordered" evidence="2">
    <location>
        <begin position="163"/>
        <end position="204"/>
    </location>
</feature>
<feature type="region of interest" description="Disordered" evidence="2">
    <location>
        <begin position="312"/>
        <end position="361"/>
    </location>
</feature>
<feature type="region of interest" description="Disordered" evidence="2">
    <location>
        <begin position="382"/>
        <end position="401"/>
    </location>
</feature>
<feature type="compositionally biased region" description="Low complexity" evidence="2">
    <location>
        <begin position="192"/>
        <end position="204"/>
    </location>
</feature>
<feature type="compositionally biased region" description="Acidic residues" evidence="2">
    <location>
        <begin position="312"/>
        <end position="322"/>
    </location>
</feature>
<feature type="compositionally biased region" description="Basic and acidic residues" evidence="2">
    <location>
        <begin position="323"/>
        <end position="339"/>
    </location>
</feature>
<feature type="compositionally biased region" description="Acidic residues" evidence="2">
    <location>
        <begin position="340"/>
        <end position="356"/>
    </location>
</feature>
<feature type="compositionally biased region" description="Basic residues" evidence="2">
    <location>
        <begin position="383"/>
        <end position="395"/>
    </location>
</feature>